<keyword id="KW-0002">3D-structure</keyword>
<keyword id="KW-0025">Alternative splicing</keyword>
<keyword id="KW-1003">Cell membrane</keyword>
<keyword id="KW-0963">Cytoplasm</keyword>
<keyword id="KW-0221">Differentiation</keyword>
<keyword id="KW-1017">Isopeptide bond</keyword>
<keyword id="KW-0472">Membrane</keyword>
<keyword id="KW-0597">Phosphoprotein</keyword>
<keyword id="KW-1267">Proteomics identification</keyword>
<keyword id="KW-1185">Reference proteome</keyword>
<keyword id="KW-0677">Repeat</keyword>
<keyword id="KW-0808">Transferase</keyword>
<keyword id="KW-0832">Ubl conjugation</keyword>
<keyword id="KW-0833">Ubl conjugation pathway</keyword>
<gene>
    <name type="primary">SMURF1</name>
    <name type="synonym">KIAA1625</name>
</gene>
<dbReference type="EC" id="2.3.2.26" evidence="7"/>
<dbReference type="EMBL" id="AB046845">
    <property type="protein sequence ID" value="BAB13451.1"/>
    <property type="status" value="ALT_INIT"/>
    <property type="molecule type" value="mRNA"/>
</dbReference>
<dbReference type="EMBL" id="AC004893">
    <property type="protein sequence ID" value="AAC62434.1"/>
    <property type="molecule type" value="Genomic_DNA"/>
</dbReference>
<dbReference type="EMBL" id="AF464850">
    <property type="protein sequence ID" value="AAM90910.1"/>
    <property type="molecule type" value="mRNA"/>
</dbReference>
<dbReference type="EMBL" id="AC073468">
    <property type="status" value="NOT_ANNOTATED_CDS"/>
    <property type="molecule type" value="Genomic_DNA"/>
</dbReference>
<dbReference type="EMBL" id="AC114500">
    <property type="status" value="NOT_ANNOTATED_CDS"/>
    <property type="molecule type" value="Genomic_DNA"/>
</dbReference>
<dbReference type="EMBL" id="CH236956">
    <property type="protein sequence ID" value="EAL23885.1"/>
    <property type="molecule type" value="Genomic_DNA"/>
</dbReference>
<dbReference type="EMBL" id="CH236956">
    <property type="protein sequence ID" value="EAL23886.1"/>
    <property type="molecule type" value="Genomic_DNA"/>
</dbReference>
<dbReference type="EMBL" id="CH471091">
    <property type="protein sequence ID" value="EAW76687.1"/>
    <property type="molecule type" value="Genomic_DNA"/>
</dbReference>
<dbReference type="EMBL" id="CH471091">
    <property type="protein sequence ID" value="EAW76688.1"/>
    <property type="molecule type" value="Genomic_DNA"/>
</dbReference>
<dbReference type="EMBL" id="BC136804">
    <property type="protein sequence ID" value="AAI36805.1"/>
    <property type="molecule type" value="mRNA"/>
</dbReference>
<dbReference type="EMBL" id="BC144414">
    <property type="protein sequence ID" value="AAI44415.1"/>
    <property type="molecule type" value="mRNA"/>
</dbReference>
<dbReference type="EMBL" id="BC152468">
    <property type="protein sequence ID" value="AAI52469.1"/>
    <property type="molecule type" value="mRNA"/>
</dbReference>
<dbReference type="EMBL" id="AF199364">
    <property type="protein sequence ID" value="AAF08298.2"/>
    <property type="molecule type" value="mRNA"/>
</dbReference>
<dbReference type="CCDS" id="CCDS34689.1">
    <molecule id="Q9HCE7-2"/>
</dbReference>
<dbReference type="CCDS" id="CCDS34690.1">
    <molecule id="Q9HCE7-1"/>
</dbReference>
<dbReference type="RefSeq" id="NP_001186776.1">
    <property type="nucleotide sequence ID" value="NM_001199847.1"/>
</dbReference>
<dbReference type="RefSeq" id="NP_065162.1">
    <molecule id="Q9HCE7-1"/>
    <property type="nucleotide sequence ID" value="NM_020429.3"/>
</dbReference>
<dbReference type="RefSeq" id="NP_851994.1">
    <molecule id="Q9HCE7-2"/>
    <property type="nucleotide sequence ID" value="NM_181349.3"/>
</dbReference>
<dbReference type="PDB" id="2LAZ">
    <property type="method" value="NMR"/>
    <property type="chains" value="A=235-267"/>
</dbReference>
<dbReference type="PDB" id="2LB0">
    <property type="method" value="NMR"/>
    <property type="chains" value="A=235-267"/>
</dbReference>
<dbReference type="PDB" id="2LB1">
    <property type="method" value="NMR"/>
    <property type="chains" value="A=305-340"/>
</dbReference>
<dbReference type="PDB" id="2LTX">
    <property type="method" value="NMR"/>
    <property type="chains" value="A=306-340"/>
</dbReference>
<dbReference type="PDB" id="3PYC">
    <property type="method" value="X-ray"/>
    <property type="resolution" value="1.96 A"/>
    <property type="chains" value="A=13-140"/>
</dbReference>
<dbReference type="PDBsum" id="2LAZ"/>
<dbReference type="PDBsum" id="2LB0"/>
<dbReference type="PDBsum" id="2LB1"/>
<dbReference type="PDBsum" id="2LTX"/>
<dbReference type="PDBsum" id="3PYC"/>
<dbReference type="BMRB" id="Q9HCE7"/>
<dbReference type="SMR" id="Q9HCE7"/>
<dbReference type="BioGRID" id="121411">
    <property type="interactions" value="563"/>
</dbReference>
<dbReference type="CORUM" id="Q9HCE7"/>
<dbReference type="DIP" id="DIP-36709N"/>
<dbReference type="FunCoup" id="Q9HCE7">
    <property type="interactions" value="2664"/>
</dbReference>
<dbReference type="IntAct" id="Q9HCE7">
    <property type="interactions" value="78"/>
</dbReference>
<dbReference type="MINT" id="Q9HCE7"/>
<dbReference type="STRING" id="9606.ENSP00000354621"/>
<dbReference type="BindingDB" id="Q9HCE7"/>
<dbReference type="ChEMBL" id="CHEMBL3879859"/>
<dbReference type="iPTMnet" id="Q9HCE7"/>
<dbReference type="PhosphoSitePlus" id="Q9HCE7"/>
<dbReference type="SwissPalm" id="Q9HCE7"/>
<dbReference type="BioMuta" id="SMURF1"/>
<dbReference type="DMDM" id="17865625"/>
<dbReference type="jPOST" id="Q9HCE7"/>
<dbReference type="MassIVE" id="Q9HCE7"/>
<dbReference type="PaxDb" id="9606-ENSP00000354621"/>
<dbReference type="PeptideAtlas" id="Q9HCE7"/>
<dbReference type="ProteomicsDB" id="81693">
    <molecule id="Q9HCE7-1"/>
</dbReference>
<dbReference type="ProteomicsDB" id="81694">
    <molecule id="Q9HCE7-2"/>
</dbReference>
<dbReference type="Pumba" id="Q9HCE7"/>
<dbReference type="ABCD" id="Q9HCE7">
    <property type="antibodies" value="2 sequenced antibodies"/>
</dbReference>
<dbReference type="Antibodypedia" id="30289">
    <property type="antibodies" value="406 antibodies from 37 providers"/>
</dbReference>
<dbReference type="DNASU" id="57154"/>
<dbReference type="Ensembl" id="ENST00000361125.1">
    <molecule id="Q9HCE7-1"/>
    <property type="protein sequence ID" value="ENSP00000354621.1"/>
    <property type="gene ID" value="ENSG00000198742.10"/>
</dbReference>
<dbReference type="Ensembl" id="ENST00000361368.7">
    <molecule id="Q9HCE7-2"/>
    <property type="protein sequence ID" value="ENSP00000355326.2"/>
    <property type="gene ID" value="ENSG00000198742.10"/>
</dbReference>
<dbReference type="GeneID" id="57154"/>
<dbReference type="KEGG" id="hsa:57154"/>
<dbReference type="MANE-Select" id="ENST00000361368.7">
    <molecule id="Q9HCE7-2"/>
    <property type="protein sequence ID" value="ENSP00000355326.2"/>
    <property type="RefSeq nucleotide sequence ID" value="NM_181349.3"/>
    <property type="RefSeq protein sequence ID" value="NP_851994.1"/>
</dbReference>
<dbReference type="UCSC" id="uc003upu.3">
    <molecule id="Q9HCE7-1"/>
    <property type="organism name" value="human"/>
</dbReference>
<dbReference type="AGR" id="HGNC:16807"/>
<dbReference type="CTD" id="57154"/>
<dbReference type="DisGeNET" id="57154"/>
<dbReference type="GeneCards" id="SMURF1"/>
<dbReference type="HGNC" id="HGNC:16807">
    <property type="gene designation" value="SMURF1"/>
</dbReference>
<dbReference type="HPA" id="ENSG00000198742">
    <property type="expression patterns" value="Low tissue specificity"/>
</dbReference>
<dbReference type="MIM" id="605568">
    <property type="type" value="gene"/>
</dbReference>
<dbReference type="neXtProt" id="NX_Q9HCE7"/>
<dbReference type="OpenTargets" id="ENSG00000198742"/>
<dbReference type="PharmGKB" id="PA134987175"/>
<dbReference type="VEuPathDB" id="HostDB:ENSG00000198742"/>
<dbReference type="eggNOG" id="KOG0940">
    <property type="taxonomic scope" value="Eukaryota"/>
</dbReference>
<dbReference type="GeneTree" id="ENSGT00940000158690"/>
<dbReference type="HOGENOM" id="CLU_002173_1_1_1"/>
<dbReference type="InParanoid" id="Q9HCE7"/>
<dbReference type="OMA" id="QWDRPRH"/>
<dbReference type="OrthoDB" id="8068875at2759"/>
<dbReference type="PAN-GO" id="Q9HCE7">
    <property type="GO annotations" value="6 GO annotations based on evolutionary models"/>
</dbReference>
<dbReference type="PhylomeDB" id="Q9HCE7"/>
<dbReference type="TreeFam" id="TF323658"/>
<dbReference type="BRENDA" id="2.3.2.26">
    <property type="organism ID" value="2681"/>
</dbReference>
<dbReference type="PathwayCommons" id="Q9HCE7"/>
<dbReference type="Reactome" id="R-HSA-201451">
    <property type="pathway name" value="Signaling by BMP"/>
</dbReference>
<dbReference type="Reactome" id="R-HSA-2173788">
    <property type="pathway name" value="Downregulation of TGF-beta receptor signaling"/>
</dbReference>
<dbReference type="Reactome" id="R-HSA-2173791">
    <property type="pathway name" value="TGF-beta receptor signaling in EMT (epithelial to mesenchymal transition)"/>
</dbReference>
<dbReference type="Reactome" id="R-HSA-4608870">
    <property type="pathway name" value="Asymmetric localization of PCP proteins"/>
</dbReference>
<dbReference type="Reactome" id="R-HSA-5632684">
    <property type="pathway name" value="Hedgehog 'on' state"/>
</dbReference>
<dbReference type="Reactome" id="R-HSA-8939902">
    <property type="pathway name" value="Regulation of RUNX2 expression and activity"/>
</dbReference>
<dbReference type="Reactome" id="R-HSA-8941858">
    <property type="pathway name" value="Regulation of RUNX3 expression and activity"/>
</dbReference>
<dbReference type="Reactome" id="R-HSA-983168">
    <property type="pathway name" value="Antigen processing: Ubiquitination &amp; Proteasome degradation"/>
</dbReference>
<dbReference type="SignaLink" id="Q9HCE7"/>
<dbReference type="SIGNOR" id="Q9HCE7"/>
<dbReference type="UniPathway" id="UPA00143"/>
<dbReference type="BioGRID-ORCS" id="57154">
    <property type="hits" value="35 hits in 1206 CRISPR screens"/>
</dbReference>
<dbReference type="ChiTaRS" id="SMURF1">
    <property type="organism name" value="human"/>
</dbReference>
<dbReference type="EvolutionaryTrace" id="Q9HCE7"/>
<dbReference type="GeneWiki" id="SMURF1"/>
<dbReference type="GenomeRNAi" id="57154"/>
<dbReference type="Pharos" id="Q9HCE7">
    <property type="development level" value="Tchem"/>
</dbReference>
<dbReference type="PRO" id="PR:Q9HCE7"/>
<dbReference type="Proteomes" id="UP000005640">
    <property type="component" value="Chromosome 7"/>
</dbReference>
<dbReference type="RNAct" id="Q9HCE7">
    <property type="molecule type" value="protein"/>
</dbReference>
<dbReference type="Bgee" id="ENSG00000198742">
    <property type="expression patterns" value="Expressed in popliteal artery and 100 other cell types or tissues"/>
</dbReference>
<dbReference type="GO" id="GO:0030424">
    <property type="term" value="C:axon"/>
    <property type="evidence" value="ECO:0007669"/>
    <property type="project" value="Ensembl"/>
</dbReference>
<dbReference type="GO" id="GO:0005737">
    <property type="term" value="C:cytoplasm"/>
    <property type="evidence" value="ECO:0000314"/>
    <property type="project" value="UniProtKB"/>
</dbReference>
<dbReference type="GO" id="GO:0005829">
    <property type="term" value="C:cytosol"/>
    <property type="evidence" value="ECO:0000304"/>
    <property type="project" value="Reactome"/>
</dbReference>
<dbReference type="GO" id="GO:0070062">
    <property type="term" value="C:extracellular exosome"/>
    <property type="evidence" value="ECO:0007005"/>
    <property type="project" value="UniProtKB"/>
</dbReference>
<dbReference type="GO" id="GO:0043025">
    <property type="term" value="C:neuronal cell body"/>
    <property type="evidence" value="ECO:0007669"/>
    <property type="project" value="Ensembl"/>
</dbReference>
<dbReference type="GO" id="GO:0005654">
    <property type="term" value="C:nucleoplasm"/>
    <property type="evidence" value="ECO:0000304"/>
    <property type="project" value="Reactome"/>
</dbReference>
<dbReference type="GO" id="GO:0005886">
    <property type="term" value="C:plasma membrane"/>
    <property type="evidence" value="ECO:0000314"/>
    <property type="project" value="BHF-UCL"/>
</dbReference>
<dbReference type="GO" id="GO:0070697">
    <property type="term" value="F:activin receptor binding"/>
    <property type="evidence" value="ECO:0000353"/>
    <property type="project" value="BHF-UCL"/>
</dbReference>
<dbReference type="GO" id="GO:0070411">
    <property type="term" value="F:I-SMAD binding"/>
    <property type="evidence" value="ECO:0000353"/>
    <property type="project" value="BHF-UCL"/>
</dbReference>
<dbReference type="GO" id="GO:0005543">
    <property type="term" value="F:phospholipid binding"/>
    <property type="evidence" value="ECO:0000304"/>
    <property type="project" value="ParkinsonsUK-UCL"/>
</dbReference>
<dbReference type="GO" id="GO:0070412">
    <property type="term" value="F:R-SMAD binding"/>
    <property type="evidence" value="ECO:0000353"/>
    <property type="project" value="BHF-UCL"/>
</dbReference>
<dbReference type="GO" id="GO:0046332">
    <property type="term" value="F:SMAD binding"/>
    <property type="evidence" value="ECO:0000318"/>
    <property type="project" value="GO_Central"/>
</dbReference>
<dbReference type="GO" id="GO:0005160">
    <property type="term" value="F:transforming growth factor beta receptor binding"/>
    <property type="evidence" value="ECO:0000353"/>
    <property type="project" value="BHF-UCL"/>
</dbReference>
<dbReference type="GO" id="GO:0061630">
    <property type="term" value="F:ubiquitin protein ligase activity"/>
    <property type="evidence" value="ECO:0000314"/>
    <property type="project" value="BHF-UCL"/>
</dbReference>
<dbReference type="GO" id="GO:0004842">
    <property type="term" value="F:ubiquitin-protein transferase activity"/>
    <property type="evidence" value="ECO:0000314"/>
    <property type="project" value="UniProtKB"/>
</dbReference>
<dbReference type="GO" id="GO:0030509">
    <property type="term" value="P:BMP signaling pathway"/>
    <property type="evidence" value="ECO:0000314"/>
    <property type="project" value="UniProtKB"/>
</dbReference>
<dbReference type="GO" id="GO:0030154">
    <property type="term" value="P:cell differentiation"/>
    <property type="evidence" value="ECO:0000314"/>
    <property type="project" value="UniProtKB"/>
</dbReference>
<dbReference type="GO" id="GO:0007398">
    <property type="term" value="P:ectoderm development"/>
    <property type="evidence" value="ECO:0000304"/>
    <property type="project" value="UniProtKB"/>
</dbReference>
<dbReference type="GO" id="GO:0061736">
    <property type="term" value="P:engulfment of target by autophagosome"/>
    <property type="evidence" value="ECO:0000315"/>
    <property type="project" value="ParkinsonsUK-UCL"/>
</dbReference>
<dbReference type="GO" id="GO:0032926">
    <property type="term" value="P:negative regulation of activin receptor signaling pathway"/>
    <property type="evidence" value="ECO:0000314"/>
    <property type="project" value="BHF-UCL"/>
</dbReference>
<dbReference type="GO" id="GO:0030514">
    <property type="term" value="P:negative regulation of BMP signaling pathway"/>
    <property type="evidence" value="ECO:0000314"/>
    <property type="project" value="BHF-UCL"/>
</dbReference>
<dbReference type="GO" id="GO:0030512">
    <property type="term" value="P:negative regulation of transforming growth factor beta receptor signaling pathway"/>
    <property type="evidence" value="ECO:0000314"/>
    <property type="project" value="BHF-UCL"/>
</dbReference>
<dbReference type="GO" id="GO:0045773">
    <property type="term" value="P:positive regulation of axon extension"/>
    <property type="evidence" value="ECO:0007669"/>
    <property type="project" value="Ensembl"/>
</dbReference>
<dbReference type="GO" id="GO:1903861">
    <property type="term" value="P:positive regulation of dendrite extension"/>
    <property type="evidence" value="ECO:0000314"/>
    <property type="project" value="UniProtKB"/>
</dbReference>
<dbReference type="GO" id="GO:2000060">
    <property type="term" value="P:positive regulation of ubiquitin-dependent protein catabolic process"/>
    <property type="evidence" value="ECO:0000315"/>
    <property type="project" value="CACAO"/>
</dbReference>
<dbReference type="GO" id="GO:0043161">
    <property type="term" value="P:proteasome-mediated ubiquitin-dependent protein catabolic process"/>
    <property type="evidence" value="ECO:0000314"/>
    <property type="project" value="BHF-UCL"/>
</dbReference>
<dbReference type="GO" id="GO:0006611">
    <property type="term" value="P:protein export from nucleus"/>
    <property type="evidence" value="ECO:0000314"/>
    <property type="project" value="BHF-UCL"/>
</dbReference>
<dbReference type="GO" id="GO:0072659">
    <property type="term" value="P:protein localization to plasma membrane"/>
    <property type="evidence" value="ECO:0000314"/>
    <property type="project" value="BHF-UCL"/>
</dbReference>
<dbReference type="GO" id="GO:0000209">
    <property type="term" value="P:protein polyubiquitination"/>
    <property type="evidence" value="ECO:0000314"/>
    <property type="project" value="UniProtKB"/>
</dbReference>
<dbReference type="GO" id="GO:0071211">
    <property type="term" value="P:protein targeting to vacuole involved in autophagy"/>
    <property type="evidence" value="ECO:0000315"/>
    <property type="project" value="ParkinsonsUK-UCL"/>
</dbReference>
<dbReference type="GO" id="GO:0032801">
    <property type="term" value="P:receptor catabolic process"/>
    <property type="evidence" value="ECO:0000314"/>
    <property type="project" value="BHF-UCL"/>
</dbReference>
<dbReference type="GO" id="GO:0061753">
    <property type="term" value="P:substrate localization to autophagosome"/>
    <property type="evidence" value="ECO:0000315"/>
    <property type="project" value="ParkinsonsUK-UCL"/>
</dbReference>
<dbReference type="GO" id="GO:0006511">
    <property type="term" value="P:ubiquitin-dependent protein catabolic process"/>
    <property type="evidence" value="ECO:0000314"/>
    <property type="project" value="UniProtKB"/>
</dbReference>
<dbReference type="GO" id="GO:0060071">
    <property type="term" value="P:Wnt signaling pathway, planar cell polarity pathway"/>
    <property type="evidence" value="ECO:0000304"/>
    <property type="project" value="Reactome"/>
</dbReference>
<dbReference type="CDD" id="cd08382">
    <property type="entry name" value="C2_Smurf-like"/>
    <property type="match status" value="1"/>
</dbReference>
<dbReference type="CDD" id="cd00078">
    <property type="entry name" value="HECTc"/>
    <property type="match status" value="1"/>
</dbReference>
<dbReference type="CDD" id="cd00201">
    <property type="entry name" value="WW"/>
    <property type="match status" value="2"/>
</dbReference>
<dbReference type="FunFam" id="2.20.70.10:FF:000017">
    <property type="entry name" value="E3 ubiquitin-protein ligase"/>
    <property type="match status" value="1"/>
</dbReference>
<dbReference type="FunFam" id="2.60.40.150:FF:000024">
    <property type="entry name" value="E3 ubiquitin-protein ligase"/>
    <property type="match status" value="1"/>
</dbReference>
<dbReference type="FunFam" id="3.30.2160.10:FF:000001">
    <property type="entry name" value="E3 ubiquitin-protein ligase NEDD4-like"/>
    <property type="match status" value="1"/>
</dbReference>
<dbReference type="FunFam" id="2.20.70.10:FF:000014">
    <property type="entry name" value="E3 ubiquitin-protein ligase SMURF1"/>
    <property type="match status" value="1"/>
</dbReference>
<dbReference type="FunFam" id="3.30.2410.10:FF:000014">
    <property type="entry name" value="E3 ubiquitin-protein ligase SMURF1"/>
    <property type="match status" value="1"/>
</dbReference>
<dbReference type="FunFam" id="3.90.1750.10:FF:000007">
    <property type="entry name" value="E3 ubiquitin-protein ligase SMURF2"/>
    <property type="match status" value="1"/>
</dbReference>
<dbReference type="Gene3D" id="2.20.70.10">
    <property type="match status" value="1"/>
</dbReference>
<dbReference type="Gene3D" id="2.60.40.150">
    <property type="entry name" value="C2 domain"/>
    <property type="match status" value="1"/>
</dbReference>
<dbReference type="Gene3D" id="3.30.2160.10">
    <property type="entry name" value="Hect, E3 ligase catalytic domain"/>
    <property type="match status" value="1"/>
</dbReference>
<dbReference type="Gene3D" id="3.30.2410.10">
    <property type="entry name" value="Hect, E3 ligase catalytic domain"/>
    <property type="match status" value="1"/>
</dbReference>
<dbReference type="Gene3D" id="3.90.1750.10">
    <property type="entry name" value="Hect, E3 ligase catalytic domains"/>
    <property type="match status" value="1"/>
</dbReference>
<dbReference type="IDEAL" id="IID00328"/>
<dbReference type="InterPro" id="IPR000008">
    <property type="entry name" value="C2_dom"/>
</dbReference>
<dbReference type="InterPro" id="IPR035892">
    <property type="entry name" value="C2_domain_sf"/>
</dbReference>
<dbReference type="InterPro" id="IPR024928">
    <property type="entry name" value="E3_ub_ligase_SMURF1"/>
</dbReference>
<dbReference type="InterPro" id="IPR050409">
    <property type="entry name" value="E3_ubiq-protein_ligase"/>
</dbReference>
<dbReference type="InterPro" id="IPR000569">
    <property type="entry name" value="HECT_dom"/>
</dbReference>
<dbReference type="InterPro" id="IPR035983">
    <property type="entry name" value="Hect_E3_ubiquitin_ligase"/>
</dbReference>
<dbReference type="InterPro" id="IPR001202">
    <property type="entry name" value="WW_dom"/>
</dbReference>
<dbReference type="InterPro" id="IPR036020">
    <property type="entry name" value="WW_dom_sf"/>
</dbReference>
<dbReference type="PANTHER" id="PTHR11254:SF293">
    <property type="entry name" value="E3 UBIQUITIN-PROTEIN LIGASE SMURF1"/>
    <property type="match status" value="1"/>
</dbReference>
<dbReference type="PANTHER" id="PTHR11254">
    <property type="entry name" value="HECT DOMAIN UBIQUITIN-PROTEIN LIGASE"/>
    <property type="match status" value="1"/>
</dbReference>
<dbReference type="Pfam" id="PF00168">
    <property type="entry name" value="C2"/>
    <property type="match status" value="1"/>
</dbReference>
<dbReference type="Pfam" id="PF00632">
    <property type="entry name" value="HECT"/>
    <property type="match status" value="1"/>
</dbReference>
<dbReference type="Pfam" id="PF00397">
    <property type="entry name" value="WW"/>
    <property type="match status" value="2"/>
</dbReference>
<dbReference type="PIRSF" id="PIRSF001569">
    <property type="entry name" value="E3_ub_ligase_SMURF1"/>
    <property type="match status" value="1"/>
</dbReference>
<dbReference type="SMART" id="SM00239">
    <property type="entry name" value="C2"/>
    <property type="match status" value="1"/>
</dbReference>
<dbReference type="SMART" id="SM00119">
    <property type="entry name" value="HECTc"/>
    <property type="match status" value="1"/>
</dbReference>
<dbReference type="SMART" id="SM00456">
    <property type="entry name" value="WW"/>
    <property type="match status" value="2"/>
</dbReference>
<dbReference type="SUPFAM" id="SSF49562">
    <property type="entry name" value="C2 domain (Calcium/lipid-binding domain, CaLB)"/>
    <property type="match status" value="1"/>
</dbReference>
<dbReference type="SUPFAM" id="SSF56204">
    <property type="entry name" value="Hect, E3 ligase catalytic domain"/>
    <property type="match status" value="1"/>
</dbReference>
<dbReference type="SUPFAM" id="SSF51045">
    <property type="entry name" value="WW domain"/>
    <property type="match status" value="2"/>
</dbReference>
<dbReference type="PROSITE" id="PS50004">
    <property type="entry name" value="C2"/>
    <property type="match status" value="1"/>
</dbReference>
<dbReference type="PROSITE" id="PS50237">
    <property type="entry name" value="HECT"/>
    <property type="match status" value="1"/>
</dbReference>
<dbReference type="PROSITE" id="PS01159">
    <property type="entry name" value="WW_DOMAIN_1"/>
    <property type="match status" value="1"/>
</dbReference>
<dbReference type="PROSITE" id="PS50020">
    <property type="entry name" value="WW_DOMAIN_2"/>
    <property type="match status" value="2"/>
</dbReference>
<name>SMUF1_HUMAN</name>
<reference key="1">
    <citation type="journal article" date="2000" name="DNA Res.">
        <title>Prediction of the coding sequences of unidentified human genes. XVIII. The complete sequences of 100 new cDNA clones from brain which code for large proteins in vitro.</title>
        <authorList>
            <person name="Nagase T."/>
            <person name="Kikuno R."/>
            <person name="Nakayama M."/>
            <person name="Hirosawa M."/>
            <person name="Ohara O."/>
        </authorList>
    </citation>
    <scope>NUCLEOTIDE SEQUENCE [LARGE SCALE MRNA] (ISOFORM LONG)</scope>
    <source>
        <tissue>Brain</tissue>
    </source>
</reference>
<reference key="2">
    <citation type="submission" date="2002-01" db="EMBL/GenBank/DDBJ databases">
        <title>Smurf1-beta, an alternatively spliced variant of Smad-ubiquitin E3 ligase Smurf1.</title>
        <authorList>
            <person name="Liang M."/>
            <person name="Lin X."/>
            <person name="Feng X.-H."/>
        </authorList>
    </citation>
    <scope>NUCLEOTIDE SEQUENCE [MRNA]</scope>
</reference>
<reference key="3">
    <citation type="journal article" date="2003" name="Nature">
        <title>The DNA sequence of human chromosome 7.</title>
        <authorList>
            <person name="Hillier L.W."/>
            <person name="Fulton R.S."/>
            <person name="Fulton L.A."/>
            <person name="Graves T.A."/>
            <person name="Pepin K.H."/>
            <person name="Wagner-McPherson C."/>
            <person name="Layman D."/>
            <person name="Maas J."/>
            <person name="Jaeger S."/>
            <person name="Walker R."/>
            <person name="Wylie K."/>
            <person name="Sekhon M."/>
            <person name="Becker M.C."/>
            <person name="O'Laughlin M.D."/>
            <person name="Schaller M.E."/>
            <person name="Fewell G.A."/>
            <person name="Delehaunty K.D."/>
            <person name="Miner T.L."/>
            <person name="Nash W.E."/>
            <person name="Cordes M."/>
            <person name="Du H."/>
            <person name="Sun H."/>
            <person name="Edwards J."/>
            <person name="Bradshaw-Cordum H."/>
            <person name="Ali J."/>
            <person name="Andrews S."/>
            <person name="Isak A."/>
            <person name="Vanbrunt A."/>
            <person name="Nguyen C."/>
            <person name="Du F."/>
            <person name="Lamar B."/>
            <person name="Courtney L."/>
            <person name="Kalicki J."/>
            <person name="Ozersky P."/>
            <person name="Bielicki L."/>
            <person name="Scott K."/>
            <person name="Holmes A."/>
            <person name="Harkins R."/>
            <person name="Harris A."/>
            <person name="Strong C.M."/>
            <person name="Hou S."/>
            <person name="Tomlinson C."/>
            <person name="Dauphin-Kohlberg S."/>
            <person name="Kozlowicz-Reilly A."/>
            <person name="Leonard S."/>
            <person name="Rohlfing T."/>
            <person name="Rock S.M."/>
            <person name="Tin-Wollam A.-M."/>
            <person name="Abbott A."/>
            <person name="Minx P."/>
            <person name="Maupin R."/>
            <person name="Strowmatt C."/>
            <person name="Latreille P."/>
            <person name="Miller N."/>
            <person name="Johnson D."/>
            <person name="Murray J."/>
            <person name="Woessner J.P."/>
            <person name="Wendl M.C."/>
            <person name="Yang S.-P."/>
            <person name="Schultz B.R."/>
            <person name="Wallis J.W."/>
            <person name="Spieth J."/>
            <person name="Bieri T.A."/>
            <person name="Nelson J.O."/>
            <person name="Berkowicz N."/>
            <person name="Wohldmann P.E."/>
            <person name="Cook L.L."/>
            <person name="Hickenbotham M.T."/>
            <person name="Eldred J."/>
            <person name="Williams D."/>
            <person name="Bedell J.A."/>
            <person name="Mardis E.R."/>
            <person name="Clifton S.W."/>
            <person name="Chissoe S.L."/>
            <person name="Marra M.A."/>
            <person name="Raymond C."/>
            <person name="Haugen E."/>
            <person name="Gillett W."/>
            <person name="Zhou Y."/>
            <person name="James R."/>
            <person name="Phelps K."/>
            <person name="Iadanoto S."/>
            <person name="Bubb K."/>
            <person name="Simms E."/>
            <person name="Levy R."/>
            <person name="Clendenning J."/>
            <person name="Kaul R."/>
            <person name="Kent W.J."/>
            <person name="Furey T.S."/>
            <person name="Baertsch R.A."/>
            <person name="Brent M.R."/>
            <person name="Keibler E."/>
            <person name="Flicek P."/>
            <person name="Bork P."/>
            <person name="Suyama M."/>
            <person name="Bailey J.A."/>
            <person name="Portnoy M.E."/>
            <person name="Torrents D."/>
            <person name="Chinwalla A.T."/>
            <person name="Gish W.R."/>
            <person name="Eddy S.R."/>
            <person name="McPherson J.D."/>
            <person name="Olson M.V."/>
            <person name="Eichler E.E."/>
            <person name="Green E.D."/>
            <person name="Waterston R.H."/>
            <person name="Wilson R.K."/>
        </authorList>
    </citation>
    <scope>NUCLEOTIDE SEQUENCE [LARGE SCALE GENOMIC DNA]</scope>
</reference>
<reference key="4">
    <citation type="submission" date="2005-09" db="EMBL/GenBank/DDBJ databases">
        <authorList>
            <person name="Mural R.J."/>
            <person name="Istrail S."/>
            <person name="Sutton G.G."/>
            <person name="Florea L."/>
            <person name="Halpern A.L."/>
            <person name="Mobarry C.M."/>
            <person name="Lippert R."/>
            <person name="Walenz B."/>
            <person name="Shatkay H."/>
            <person name="Dew I."/>
            <person name="Miller J.R."/>
            <person name="Flanigan M.J."/>
            <person name="Edwards N.J."/>
            <person name="Bolanos R."/>
            <person name="Fasulo D."/>
            <person name="Halldorsson B.V."/>
            <person name="Hannenhalli S."/>
            <person name="Turner R."/>
            <person name="Yooseph S."/>
            <person name="Lu F."/>
            <person name="Nusskern D.R."/>
            <person name="Shue B.C."/>
            <person name="Zheng X.H."/>
            <person name="Zhong F."/>
            <person name="Delcher A.L."/>
            <person name="Huson D.H."/>
            <person name="Kravitz S.A."/>
            <person name="Mouchard L."/>
            <person name="Reinert K."/>
            <person name="Remington K.A."/>
            <person name="Clark A.G."/>
            <person name="Waterman M.S."/>
            <person name="Eichler E.E."/>
            <person name="Adams M.D."/>
            <person name="Hunkapiller M.W."/>
            <person name="Myers E.W."/>
            <person name="Venter J.C."/>
        </authorList>
    </citation>
    <scope>NUCLEOTIDE SEQUENCE [LARGE SCALE GENOMIC DNA]</scope>
</reference>
<reference key="5">
    <citation type="journal article" date="2003" name="Science">
        <title>Human chromosome 7: DNA sequence and biology.</title>
        <authorList>
            <person name="Scherer S.W."/>
            <person name="Cheung J."/>
            <person name="MacDonald J.R."/>
            <person name="Osborne L.R."/>
            <person name="Nakabayashi K."/>
            <person name="Herbrick J.-A."/>
            <person name="Carson A.R."/>
            <person name="Parker-Katiraee L."/>
            <person name="Skaug J."/>
            <person name="Khaja R."/>
            <person name="Zhang J."/>
            <person name="Hudek A.K."/>
            <person name="Li M."/>
            <person name="Haddad M."/>
            <person name="Duggan G.E."/>
            <person name="Fernandez B.A."/>
            <person name="Kanematsu E."/>
            <person name="Gentles S."/>
            <person name="Christopoulos C.C."/>
            <person name="Choufani S."/>
            <person name="Kwasnicka D."/>
            <person name="Zheng X.H."/>
            <person name="Lai Z."/>
            <person name="Nusskern D.R."/>
            <person name="Zhang Q."/>
            <person name="Gu Z."/>
            <person name="Lu F."/>
            <person name="Zeesman S."/>
            <person name="Nowaczyk M.J."/>
            <person name="Teshima I."/>
            <person name="Chitayat D."/>
            <person name="Shuman C."/>
            <person name="Weksberg R."/>
            <person name="Zackai E.H."/>
            <person name="Grebe T.A."/>
            <person name="Cox S.R."/>
            <person name="Kirkpatrick S.J."/>
            <person name="Rahman N."/>
            <person name="Friedman J.M."/>
            <person name="Heng H.H.Q."/>
            <person name="Pelicci P.G."/>
            <person name="Lo-Coco F."/>
            <person name="Belloni E."/>
            <person name="Shaffer L.G."/>
            <person name="Pober B."/>
            <person name="Morton C.C."/>
            <person name="Gusella J.F."/>
            <person name="Bruns G.A.P."/>
            <person name="Korf B.R."/>
            <person name="Quade B.J."/>
            <person name="Ligon A.H."/>
            <person name="Ferguson H."/>
            <person name="Higgins A.W."/>
            <person name="Leach N.T."/>
            <person name="Herrick S.R."/>
            <person name="Lemyre E."/>
            <person name="Farra C.G."/>
            <person name="Kim H.-G."/>
            <person name="Summers A.M."/>
            <person name="Gripp K.W."/>
            <person name="Roberts W."/>
            <person name="Szatmari P."/>
            <person name="Winsor E.J.T."/>
            <person name="Grzeschik K.-H."/>
            <person name="Teebi A."/>
            <person name="Minassian B.A."/>
            <person name="Kere J."/>
            <person name="Armengol L."/>
            <person name="Pujana M.A."/>
            <person name="Estivill X."/>
            <person name="Wilson M.D."/>
            <person name="Koop B.F."/>
            <person name="Tosi S."/>
            <person name="Moore G.E."/>
            <person name="Boright A.P."/>
            <person name="Zlotorynski E."/>
            <person name="Kerem B."/>
            <person name="Kroisel P.M."/>
            <person name="Petek E."/>
            <person name="Oscier D.G."/>
            <person name="Mould S.J."/>
            <person name="Doehner H."/>
            <person name="Doehner K."/>
            <person name="Rommens J.M."/>
            <person name="Vincent J.B."/>
            <person name="Venter J.C."/>
            <person name="Li P.W."/>
            <person name="Mural R.J."/>
            <person name="Adams M.D."/>
            <person name="Tsui L.-C."/>
        </authorList>
    </citation>
    <scope>NUCLEOTIDE SEQUENCE [LARGE SCALE GENOMIC DNA]</scope>
</reference>
<reference key="6">
    <citation type="journal article" date="2004" name="Genome Res.">
        <title>The status, quality, and expansion of the NIH full-length cDNA project: the Mammalian Gene Collection (MGC).</title>
        <authorList>
            <consortium name="The MGC Project Team"/>
        </authorList>
    </citation>
    <scope>NUCLEOTIDE SEQUENCE [LARGE SCALE MRNA] (ISOFORMS LONG AND SHORT)</scope>
    <source>
        <tissue>Brain</tissue>
        <tissue>Testis</tissue>
    </source>
</reference>
<reference key="7">
    <citation type="journal article" date="1999" name="Nature">
        <title>A SMAD ubiquitin ligase targets the BMP pathway and affects embryonic pattern formation.</title>
        <authorList>
            <person name="Zhu H."/>
            <person name="Kavsak P."/>
            <person name="Abdollah S."/>
            <person name="Wrana J.L."/>
            <person name="Thomsen G.H."/>
        </authorList>
    </citation>
    <scope>NUCLEOTIDE SEQUENCE [MRNA] OF 10-731 (ISOFORM SHORT)</scope>
    <scope>FUNCTION</scope>
</reference>
<reference key="8">
    <citation type="journal article" date="2000" name="Mol. Cell">
        <title>Smad7 binds to Smurf2 to form an E3 ubiquitin ligase that targets the TGF-beta receptor for degradation.</title>
        <authorList>
            <person name="Kavsak P."/>
            <person name="Rasmussen R.K."/>
            <person name="Causing C.G."/>
            <person name="Bonni S."/>
            <person name="Zhu H."/>
            <person name="Thomsen G.H."/>
            <person name="Wrana J.L."/>
        </authorList>
    </citation>
    <scope>INTERACTION WITH SMAD7 AND TGFBR1</scope>
</reference>
<reference key="9">
    <citation type="journal article" date="2010" name="Mol. Cell. Biochem.">
        <title>Ubiquitin ligase Smurf1 targets TRAF family proteins for ubiquitination and degradation.</title>
        <authorList>
            <person name="Li S."/>
            <person name="Lu K."/>
            <person name="Wang J."/>
            <person name="An L."/>
            <person name="Yang G."/>
            <person name="Chen H."/>
            <person name="Cui Y."/>
            <person name="Yin X."/>
            <person name="Xie P."/>
            <person name="Xing G."/>
            <person name="He F."/>
            <person name="Zhang L."/>
        </authorList>
    </citation>
    <scope>FUNCTION</scope>
    <scope>CATALYTIC ACTIVITY</scope>
    <scope>MUTAGENESIS OF CYS-725</scope>
    <scope>INTERACTION WITH TRAF4</scope>
</reference>
<reference key="10">
    <citation type="journal article" date="2011" name="EMBO J.">
        <title>SCF(FBXL15) regulates BMP signalling by directing the degradation of HECT-type ubiquitin ligase Smurf1.</title>
        <authorList>
            <person name="Cui Y."/>
            <person name="He S."/>
            <person name="Xing C."/>
            <person name="Lu K."/>
            <person name="Wang J."/>
            <person name="Xing G."/>
            <person name="Meng A."/>
            <person name="Jia S."/>
            <person name="He F."/>
            <person name="Zhang L."/>
        </authorList>
    </citation>
    <scope>SUBCELLULAR LOCATION</scope>
    <scope>UBIQUITINATION AT LYS-381 AND LYS-383</scope>
    <scope>INTERACTION WITH FBXL15</scope>
    <scope>MUTAGENESIS OF LYS-350; LYS-381; LYS-383 AND CYS-725</scope>
</reference>
<reference key="11">
    <citation type="journal article" date="2011" name="Mol. Cell. Biol.">
        <title>TSC-22 promotes transforming growth factor beta-mediated cardiac myofibroblast differentiation by antagonizing Smad7 activity.</title>
        <authorList>
            <person name="Yan X."/>
            <person name="Zhang J."/>
            <person name="Pan L."/>
            <person name="Wang P."/>
            <person name="Xue H."/>
            <person name="Zhang L."/>
            <person name="Gao X."/>
            <person name="Zhao X."/>
            <person name="Ning Y."/>
            <person name="Chen Y.G."/>
        </authorList>
    </citation>
    <scope>FUNCTION</scope>
</reference>
<reference key="12">
    <citation type="journal article" date="2012" name="J. Immunol.">
        <title>Ndfip1 negatively regulates RIG-I-dependent immune signaling by enhancing E3 ligase Smurf1-mediated MAVS degradation.</title>
        <authorList>
            <person name="Wang Y."/>
            <person name="Tong X."/>
            <person name="Ye X."/>
        </authorList>
    </citation>
    <scope>FUNCTION</scope>
    <scope>INTERACTION WITH MAVS</scope>
    <scope>AUTO-UBIQUITINATION</scope>
</reference>
<reference key="13">
    <citation type="journal article" date="2013" name="J. Dermatol. Sci.">
        <title>SYT14L, especially its C2 domain, is involved in regulating melanocyte differentiation.</title>
        <authorList>
            <person name="Yoo J.C."/>
            <person name="Lim T.Y."/>
            <person name="Park J.S."/>
            <person name="Hah Y.S."/>
            <person name="Park N."/>
            <person name="Hong S.G."/>
            <person name="Park J.Y."/>
            <person name="Yoon T.J."/>
        </authorList>
    </citation>
    <scope>FUNCTION</scope>
    <scope>TISSUE SPECIFICITY</scope>
</reference>
<reference key="14">
    <citation type="journal article" date="2013" name="J. Proteome Res.">
        <title>Toward a comprehensive characterization of a human cancer cell phosphoproteome.</title>
        <authorList>
            <person name="Zhou H."/>
            <person name="Di Palma S."/>
            <person name="Preisinger C."/>
            <person name="Peng M."/>
            <person name="Polat A.N."/>
            <person name="Heck A.J."/>
            <person name="Mohammed S."/>
        </authorList>
    </citation>
    <scope>PHOSPHORYLATION [LARGE SCALE ANALYSIS] AT SER-200</scope>
    <scope>IDENTIFICATION BY MASS SPECTROMETRY [LARGE SCALE ANALYSIS]</scope>
    <source>
        <tissue>Cervix carcinoma</tissue>
    </source>
</reference>
<reference key="15">
    <citation type="journal article" date="2011" name="J. Biol. Chem.">
        <title>Pivotal role of the C2 domain of the Smurf1 ubiquitin ligase in substrate selection.</title>
        <authorList>
            <person name="Lu K."/>
            <person name="Li P."/>
            <person name="Zhang M."/>
            <person name="Xing G."/>
            <person name="Li X."/>
            <person name="Zhou W."/>
            <person name="Bartlam M."/>
            <person name="Zhang L."/>
            <person name="Rao Z."/>
            <person name="He F."/>
        </authorList>
    </citation>
    <scope>X-RAY CRYSTALLOGRAPHY (1.96 ANGSTROMS) OF 13-140</scope>
    <scope>FUNCTION</scope>
    <scope>DOMAIN C2</scope>
    <scope>INTERACTION WITH RHOA</scope>
    <scope>MUTAGENESIS OF LYS-28 AND LYS-85</scope>
</reference>
<protein>
    <recommendedName>
        <fullName>E3 ubiquitin-protein ligase SMURF1</fullName>
        <shortName>hSMURF1</shortName>
        <ecNumber evidence="7">2.3.2.26</ecNumber>
    </recommendedName>
    <alternativeName>
        <fullName>HECT-type E3 ubiquitin transferase SMURF1</fullName>
    </alternativeName>
    <alternativeName>
        <fullName>SMAD ubiquitination regulatory factor 1</fullName>
    </alternativeName>
    <alternativeName>
        <fullName>SMAD-specific E3 ubiquitin-protein ligase 1</fullName>
    </alternativeName>
</protein>
<accession>Q9HCE7</accession>
<accession>A4D279</accession>
<accession>B7ZMB6</accession>
<accession>B9EGV3</accession>
<accession>O75853</accession>
<accession>Q547Q3</accession>
<accession>Q9UJT8</accession>
<proteinExistence type="evidence at protein level"/>
<organism>
    <name type="scientific">Homo sapiens</name>
    <name type="common">Human</name>
    <dbReference type="NCBI Taxonomy" id="9606"/>
    <lineage>
        <taxon>Eukaryota</taxon>
        <taxon>Metazoa</taxon>
        <taxon>Chordata</taxon>
        <taxon>Craniata</taxon>
        <taxon>Vertebrata</taxon>
        <taxon>Euteleostomi</taxon>
        <taxon>Mammalia</taxon>
        <taxon>Eutheria</taxon>
        <taxon>Euarchontoglires</taxon>
        <taxon>Primates</taxon>
        <taxon>Haplorrhini</taxon>
        <taxon>Catarrhini</taxon>
        <taxon>Hominidae</taxon>
        <taxon>Homo</taxon>
    </lineage>
</organism>
<evidence type="ECO:0000255" key="1">
    <source>
        <dbReference type="PROSITE-ProRule" id="PRU00041"/>
    </source>
</evidence>
<evidence type="ECO:0000255" key="2">
    <source>
        <dbReference type="PROSITE-ProRule" id="PRU00104"/>
    </source>
</evidence>
<evidence type="ECO:0000255" key="3">
    <source>
        <dbReference type="PROSITE-ProRule" id="PRU00224"/>
    </source>
</evidence>
<evidence type="ECO:0000256" key="4">
    <source>
        <dbReference type="SAM" id="MobiDB-lite"/>
    </source>
</evidence>
<evidence type="ECO:0000269" key="5">
    <source>
    </source>
</evidence>
<evidence type="ECO:0000269" key="6">
    <source>
    </source>
</evidence>
<evidence type="ECO:0000269" key="7">
    <source>
    </source>
</evidence>
<evidence type="ECO:0000269" key="8">
    <source>
    </source>
</evidence>
<evidence type="ECO:0000269" key="9">
    <source>
    </source>
</evidence>
<evidence type="ECO:0000269" key="10">
    <source>
    </source>
</evidence>
<evidence type="ECO:0000269" key="11">
    <source>
    </source>
</evidence>
<evidence type="ECO:0000269" key="12">
    <source>
    </source>
</evidence>
<evidence type="ECO:0000303" key="13">
    <source>
    </source>
</evidence>
<evidence type="ECO:0000303" key="14">
    <source>
    </source>
</evidence>
<evidence type="ECO:0000305" key="15"/>
<evidence type="ECO:0007744" key="16">
    <source>
    </source>
</evidence>
<evidence type="ECO:0007829" key="17">
    <source>
        <dbReference type="PDB" id="2LAZ"/>
    </source>
</evidence>
<evidence type="ECO:0007829" key="18">
    <source>
        <dbReference type="PDB" id="2LB1"/>
    </source>
</evidence>
<evidence type="ECO:0007829" key="19">
    <source>
        <dbReference type="PDB" id="3PYC"/>
    </source>
</evidence>
<feature type="chain" id="PRO_0000120326" description="E3 ubiquitin-protein ligase SMURF1">
    <location>
        <begin position="1"/>
        <end position="757"/>
    </location>
</feature>
<feature type="domain" description="C2" evidence="1">
    <location>
        <begin position="1"/>
        <end position="120"/>
    </location>
</feature>
<feature type="domain" description="WW 1" evidence="3">
    <location>
        <begin position="234"/>
        <end position="267"/>
    </location>
</feature>
<feature type="domain" description="WW 2" evidence="3">
    <location>
        <begin position="306"/>
        <end position="339"/>
    </location>
</feature>
<feature type="domain" description="HECT" evidence="2">
    <location>
        <begin position="420"/>
        <end position="757"/>
    </location>
</feature>
<feature type="region of interest" description="Disordered" evidence="4">
    <location>
        <begin position="193"/>
        <end position="237"/>
    </location>
</feature>
<feature type="active site" description="Glycyl thioester intermediate">
    <location>
        <position position="725"/>
    </location>
</feature>
<feature type="modified residue" description="Phosphoserine" evidence="16">
    <location>
        <position position="200"/>
    </location>
</feature>
<feature type="cross-link" description="Glycyl lysine isopeptide (Lys-Gly) (interchain with G-Cter in ubiquitin)" evidence="9">
    <location>
        <position position="381"/>
    </location>
</feature>
<feature type="cross-link" description="Glycyl lysine isopeptide (Lys-Gly) (interchain with G-Cter in ubiquitin)" evidence="9">
    <location>
        <position position="383"/>
    </location>
</feature>
<feature type="splice variant" id="VSP_006812" description="In isoform Short." evidence="13 14">
    <location>
        <begin position="269"/>
        <end position="294"/>
    </location>
</feature>
<feature type="sequence variant" id="VAR_052959" description="In dbSNP:rs13246077.">
    <original>S</original>
    <variation>Y</variation>
    <location>
        <position position="466"/>
    </location>
</feature>
<feature type="mutagenesis site" description="Fails to ubiquitinate RHOA; when associated with A-85." evidence="8">
    <original>K</original>
    <variation>A</variation>
    <location>
        <position position="28"/>
    </location>
</feature>
<feature type="mutagenesis site" description="Fails to ubiquitinate RHOA; when associated with A-28." evidence="8">
    <original>K</original>
    <variation>A</variation>
    <location>
        <position position="85"/>
    </location>
</feature>
<feature type="mutagenesis site" description="Abolishes FBXL15-mediated ubiquitination and degradation; when associated with R-381 and R-381." evidence="9">
    <original>K</original>
    <variation>R</variation>
    <location>
        <position position="350"/>
    </location>
</feature>
<feature type="mutagenesis site" description="Abolishes FBXL15-mediated ubiquitination and degradation; when associated with R-350 and R-383. Abolishes FBXL15-mediated ubiquitination and degradation; when associated with R-383." evidence="9">
    <original>K</original>
    <variation>R</variation>
    <location>
        <position position="381"/>
    </location>
</feature>
<feature type="mutagenesis site" description="Abolishes FBXL15-mediated ubiquitination and degradation; when associated with R-350 and R-381. Abolishes FBXL15-mediated ubiquitination and degradation; when associated with R-381." evidence="9">
    <original>K</original>
    <variation>R</variation>
    <location>
        <position position="383"/>
    </location>
</feature>
<feature type="mutagenesis site" description="Loss of enzyme activity, without abolishing FBXL15-mediated ubiquitination." evidence="7 9">
    <original>C</original>
    <variation>A</variation>
    <location>
        <position position="725"/>
    </location>
</feature>
<feature type="sequence conflict" description="In Ref. 6; AAI44415." evidence="15" ref="6">
    <original>W</original>
    <variation>G</variation>
    <location>
        <position position="447"/>
    </location>
</feature>
<feature type="sequence conflict" description="In Ref. 6; AAI36805/AAI44415." evidence="15" ref="6">
    <location>
        <begin position="697"/>
        <end position="699"/>
    </location>
</feature>
<feature type="strand" evidence="19">
    <location>
        <begin position="13"/>
        <end position="24"/>
    </location>
</feature>
<feature type="strand" evidence="19">
    <location>
        <begin position="36"/>
        <end position="42"/>
    </location>
</feature>
<feature type="turn" evidence="19">
    <location>
        <begin position="43"/>
        <end position="45"/>
    </location>
</feature>
<feature type="strand" evidence="19">
    <location>
        <begin position="48"/>
        <end position="50"/>
    </location>
</feature>
<feature type="strand" evidence="19">
    <location>
        <begin position="61"/>
        <end position="71"/>
    </location>
</feature>
<feature type="strand" evidence="19">
    <location>
        <begin position="76"/>
        <end position="82"/>
    </location>
</feature>
<feature type="helix" evidence="19">
    <location>
        <begin position="83"/>
        <end position="85"/>
    </location>
</feature>
<feature type="turn" evidence="19">
    <location>
        <begin position="90"/>
        <end position="93"/>
    </location>
</feature>
<feature type="strand" evidence="19">
    <location>
        <begin position="94"/>
        <end position="100"/>
    </location>
</feature>
<feature type="helix" evidence="19">
    <location>
        <begin position="102"/>
        <end position="108"/>
    </location>
</feature>
<feature type="strand" evidence="19">
    <location>
        <begin position="114"/>
        <end position="117"/>
    </location>
</feature>
<feature type="strand" evidence="19">
    <location>
        <begin position="131"/>
        <end position="139"/>
    </location>
</feature>
<feature type="strand" evidence="17">
    <location>
        <begin position="241"/>
        <end position="245"/>
    </location>
</feature>
<feature type="turn" evidence="17">
    <location>
        <begin position="246"/>
        <end position="248"/>
    </location>
</feature>
<feature type="strand" evidence="17">
    <location>
        <begin position="249"/>
        <end position="254"/>
    </location>
</feature>
<feature type="turn" evidence="17">
    <location>
        <begin position="255"/>
        <end position="258"/>
    </location>
</feature>
<feature type="strand" evidence="17">
    <location>
        <begin position="259"/>
        <end position="263"/>
    </location>
</feature>
<feature type="strand" evidence="18">
    <location>
        <begin position="312"/>
        <end position="317"/>
    </location>
</feature>
<feature type="turn" evidence="18">
    <location>
        <begin position="318"/>
        <end position="320"/>
    </location>
</feature>
<feature type="strand" evidence="18">
    <location>
        <begin position="321"/>
        <end position="326"/>
    </location>
</feature>
<feature type="turn" evidence="18">
    <location>
        <begin position="327"/>
        <end position="330"/>
    </location>
</feature>
<feature type="strand" evidence="18">
    <location>
        <begin position="331"/>
        <end position="334"/>
    </location>
</feature>
<sequence>MSNPGTRRNGSSIKIRLTVLCAKNLAKKDFFRLPDPFAKIVVDGSGQCHSTDTVKNTLDPKWNQHYDLYVGKTDSITISVWNHKKIHKKQGAGFLGCVRLLSNAISRLKDTGYQRLDLCKLNPSDTDAVRGQIVVSLQTRDRIGTGGSVVDCRGLLENEGTVYEDSGPGRPLSCFMEEPAPYTDSTGAAAGGGNCRFVESPSQDQRLQAQRLRNPDVRGSLQTPQNRPHGHQSPELPEGYEQRTTVQGQVYFLHTQTGVSTWHDPRIPSPSGTIPGGDAAFLYEFLLQGHTSEPRDLNSVNCDELGPLPPGWEVRSTVSGRIYFVDHNNRTTQFTDPRLHHIMNHQCQLKEPSQPLPLPSEGSLEDEELPAQRYERDLVQKLKVLRHELSLQQPQAGHCRIEVSREEIFEESYRQIMKMRPKDLKKRLMVKFRGEEGLDYGGVAREWLYLLCHEMLNPYYGLFQYSTDNIYMLQINPDSSINPDHLSYFHFVGRIMGLAVFHGHYINGGFTVPFYKQLLGKPIQLSDLESVDPELHKSLVWILENDITPVLDHTFCVEHNAFGRILQHELKPNGRNVPVTEENKKEYVRLYVNWRFMRGIEAQFLALQKGFNELIPQHLLKPFDQKELELIIGGLDKIDLNDWKSNTRLKHCVADSNIVRWFWQAVETFDEERRARLLQFVTGSTRVPLQGFKALQGSTGAAGPRLFTIHLIDANTDNLPKAHTCFNRIDIPPYESYEKLYEKLLTAVEETCGFAVE</sequence>
<comment type="function">
    <text evidence="5 7 8 10 11 12">E3 ubiquitin-protein ligase that acts as a negative regulator of BMP signaling pathway. Mediates ubiquitination and degradation of SMAD1 and SMAD5, 2 receptor-regulated SMADs specific for the BMP pathway. Promotes ubiquitination and subsequent proteasomal degradation of TRAF family members and RHOA. Promotes ubiquitination and subsequent proteasomal degradation of MAVS (PubMed:23087404). Acts as an antagonist of TGF-beta signaling by ubiquitinating TGFBR1 and targeting it for degradation (PubMed:21791611). Plays a role in dendrite formation by melanocytes (PubMed:23999003).</text>
</comment>
<comment type="catalytic activity">
    <reaction evidence="7">
        <text>S-ubiquitinyl-[E2 ubiquitin-conjugating enzyme]-L-cysteine + [acceptor protein]-L-lysine = [E2 ubiquitin-conjugating enzyme]-L-cysteine + N(6)-ubiquitinyl-[acceptor protein]-L-lysine.</text>
        <dbReference type="EC" id="2.3.2.26"/>
    </reaction>
</comment>
<comment type="pathway">
    <text>Protein modification; protein ubiquitination.</text>
</comment>
<comment type="subunit">
    <text evidence="6 7 8 9 11">Interacts with TRAF4. Interacts (via HECT domain) with FBXL15 (via LRR repeats). Interacts with SMAD7 and TGFBR1; SMAD7 recruits SMURF1 to TGFBR1 and regulates TGF-beta receptor degradation. Interacts with MAVS; the interaction is mediated by NDFIP1 (PubMed:23087404).</text>
</comment>
<comment type="interaction">
    <interactant intactId="EBI-976466">
        <id>Q9HCE7</id>
    </interactant>
    <interactant intactId="EBI-6144096">
        <id>Q9H469</id>
        <label>FBXL15</label>
    </interactant>
    <organismsDiffer>false</organismsDiffer>
    <experiments>6</experiments>
</comment>
<comment type="interaction">
    <interactant intactId="EBI-976466">
        <id>Q9HCE7</id>
    </interactant>
    <interactant intactId="EBI-9846663">
        <id>Q9Y5W3</id>
        <label>KLF2</label>
    </interactant>
    <organismsDiffer>false</organismsDiffer>
    <experiments>2</experiments>
</comment>
<comment type="interaction">
    <interactant intactId="EBI-976466">
        <id>Q9HCE7</id>
    </interactant>
    <interactant intactId="EBI-949945">
        <id>Q53GL0</id>
        <label>PLEKHO1</label>
    </interactant>
    <organismsDiffer>false</organismsDiffer>
    <experiments>2</experiments>
</comment>
<comment type="interaction">
    <interactant intactId="EBI-976466">
        <id>Q9HCE7</id>
    </interactant>
    <interactant intactId="EBI-355546">
        <id>P61289</id>
        <label>PSME3</label>
    </interactant>
    <organismsDiffer>false</organismsDiffer>
    <experiments>5</experiments>
</comment>
<comment type="interaction">
    <interactant intactId="EBI-976466">
        <id>Q9HCE7</id>
    </interactant>
    <interactant intactId="EBI-1567153">
        <id>Q15797</id>
        <label>SMAD1</label>
    </interactant>
    <organismsDiffer>false</organismsDiffer>
    <experiments>2</experiments>
</comment>
<comment type="interaction">
    <interactant intactId="EBI-15884081">
        <id>Q9HCE7-1</id>
    </interactant>
    <interactant intactId="EBI-3861591">
        <id>O15105</id>
        <label>SMAD7</label>
    </interactant>
    <organismsDiffer>false</organismsDiffer>
    <experiments>4</experiments>
</comment>
<comment type="interaction">
    <interactant intactId="EBI-9845742">
        <id>Q9HCE7-2</id>
    </interactant>
    <interactant intactId="EBI-974488">
        <id>O14757</id>
        <label>CHEK1</label>
    </interactant>
    <organismsDiffer>false</organismsDiffer>
    <experiments>4</experiments>
</comment>
<comment type="interaction">
    <interactant intactId="EBI-9845742">
        <id>Q9HCE7-2</id>
    </interactant>
    <interactant intactId="EBI-25840379">
        <id>Q14203-5</id>
        <label>DCTN1</label>
    </interactant>
    <organismsDiffer>false</organismsDiffer>
    <experiments>3</experiments>
</comment>
<comment type="interaction">
    <interactant intactId="EBI-9845742">
        <id>Q9HCE7-2</id>
    </interactant>
    <interactant intactId="EBI-747754">
        <id>P28799</id>
        <label>GRN</label>
    </interactant>
    <organismsDiffer>false</organismsDiffer>
    <experiments>3</experiments>
</comment>
<comment type="interaction">
    <interactant intactId="EBI-9845742">
        <id>Q9HCE7-2</id>
    </interactant>
    <interactant intactId="EBI-466029">
        <id>P42858</id>
        <label>HTT</label>
    </interactant>
    <organismsDiffer>false</organismsDiffer>
    <experiments>6</experiments>
</comment>
<comment type="interaction">
    <interactant intactId="EBI-9845742">
        <id>Q9HCE7-2</id>
    </interactant>
    <interactant intactId="EBI-389787">
        <id>Q9H160</id>
        <label>ING2</label>
    </interactant>
    <organismsDiffer>false</organismsDiffer>
    <experiments>3</experiments>
</comment>
<comment type="interaction">
    <interactant intactId="EBI-9845742">
        <id>Q9HCE7-2</id>
    </interactant>
    <interactant intactId="EBI-9846663">
        <id>Q9Y5W3</id>
        <label>KLF2</label>
    </interactant>
    <organismsDiffer>false</organismsDiffer>
    <experiments>4</experiments>
</comment>
<comment type="interaction">
    <interactant intactId="EBI-9845742">
        <id>Q9HCE7-2</id>
    </interactant>
    <interactant intactId="EBI-949945">
        <id>Q53GL0</id>
        <label>PLEKHO1</label>
    </interactant>
    <organismsDiffer>false</organismsDiffer>
    <experiments>4</experiments>
</comment>
<comment type="interaction">
    <interactant intactId="EBI-9845742">
        <id>Q9HCE7-2</id>
    </interactant>
    <interactant intactId="EBI-21251460">
        <id>O60260-5</id>
        <label>PRKN</label>
    </interactant>
    <organismsDiffer>false</organismsDiffer>
    <experiments>3</experiments>
</comment>
<comment type="interaction">
    <interactant intactId="EBI-9845742">
        <id>Q9HCE7-2</id>
    </interactant>
    <interactant intactId="EBI-446668">
        <id>P61586</id>
        <label>RHOA</label>
    </interactant>
    <organismsDiffer>false</organismsDiffer>
    <experiments>2</experiments>
</comment>
<comment type="interaction">
    <interactant intactId="EBI-9845742">
        <id>Q9HCE7-2</id>
    </interactant>
    <interactant intactId="EBI-602647">
        <id>P62745</id>
        <label>RHOB</label>
    </interactant>
    <organismsDiffer>false</organismsDiffer>
    <experiments>3</experiments>
</comment>
<comment type="interaction">
    <interactant intactId="EBI-9845742">
        <id>Q9HCE7-2</id>
    </interactant>
    <interactant intactId="EBI-396669">
        <id>Q9Y3C5</id>
        <label>RNF11</label>
    </interactant>
    <organismsDiffer>false</organismsDiffer>
    <experiments>3</experiments>
</comment>
<comment type="interaction">
    <interactant intactId="EBI-9845742">
        <id>Q9HCE7-2</id>
    </interactant>
    <interactant intactId="EBI-1567153">
        <id>Q15797</id>
        <label>SMAD1</label>
    </interactant>
    <organismsDiffer>false</organismsDiffer>
    <experiments>2</experiments>
</comment>
<comment type="interaction">
    <interactant intactId="EBI-9845742">
        <id>Q9HCE7-2</id>
    </interactant>
    <interactant intactId="EBI-985879">
        <id>P37840</id>
        <label>SNCA</label>
    </interactant>
    <organismsDiffer>false</organismsDiffer>
    <experiments>3</experiments>
</comment>
<comment type="interaction">
    <interactant intactId="EBI-9845742">
        <id>Q9HCE7-2</id>
    </interactant>
    <interactant intactId="EBI-5235340">
        <id>Q7Z699</id>
        <label>SPRED1</label>
    </interactant>
    <organismsDiffer>false</organismsDiffer>
    <experiments>3</experiments>
</comment>
<comment type="interaction">
    <interactant intactId="EBI-9845742">
        <id>Q9HCE7-2</id>
    </interactant>
    <interactant intactId="EBI-372899">
        <id>Q13148</id>
        <label>TARDBP</label>
    </interactant>
    <organismsDiffer>false</organismsDiffer>
    <experiments>3</experiments>
</comment>
<comment type="interaction">
    <interactant intactId="EBI-9845742">
        <id>Q9HCE7-2</id>
    </interactant>
    <interactant intactId="EBI-3650647">
        <id>Q9BUZ4</id>
        <label>TRAF4</label>
    </interactant>
    <organismsDiffer>false</organismsDiffer>
    <experiments>4</experiments>
</comment>
<comment type="interaction">
    <interactant intactId="EBI-9845742">
        <id>Q9HCE7-2</id>
    </interactant>
    <interactant intactId="EBI-720609">
        <id>O76024</id>
        <label>WFS1</label>
    </interactant>
    <organismsDiffer>false</organismsDiffer>
    <experiments>3</experiments>
</comment>
<comment type="subcellular location">
    <subcellularLocation>
        <location evidence="9">Cytoplasm</location>
    </subcellularLocation>
    <subcellularLocation>
        <location evidence="9">Cell membrane</location>
        <topology evidence="9">Peripheral membrane protein</topology>
        <orientation evidence="9">Cytoplasmic side</orientation>
    </subcellularLocation>
</comment>
<comment type="alternative products">
    <event type="alternative splicing"/>
    <isoform>
        <id>Q9HCE7-1</id>
        <name>Long</name>
        <sequence type="displayed"/>
    </isoform>
    <isoform>
        <id>Q9HCE7-2</id>
        <name>Short</name>
        <sequence type="described" ref="VSP_006812"/>
    </isoform>
</comment>
<comment type="tissue specificity">
    <text evidence="12">Expressed in melanocytes (PubMed:23999003).</text>
</comment>
<comment type="domain">
    <text evidence="8">The C2 domain mediates membrane localization and substrate selection.</text>
</comment>
<comment type="PTM">
    <text evidence="9 11">Auto-ubiquitinated in presence of NDFIP1 (PubMed:23087404). Ubiquitinated by the SCF(FBXL15) complex at Lys-381 and Lys-383, leading to its degradation by the proteasome. Lys-383 is the primary ubiquitination site.</text>
</comment>
<comment type="sequence caution" evidence="15">
    <conflict type="erroneous initiation">
        <sequence resource="EMBL-CDS" id="BAB13451"/>
    </conflict>
</comment>